<gene>
    <name type="primary">ASZ1</name>
    <name type="synonym">GASZ</name>
</gene>
<sequence>MAAGRLRGLAVAGGGESSESDDDGWEIGYLDRASQKLKGVLPTEEKNETFKKALTTGDISLVQELLNSGISVDSSFRYGWTPLMYAASVSNVELVRVLLDRGANANFDKDKQTILITTCSSRGSEEQIVKCVELLLSRNADPNVPCRRLMTPIMYAARDGHPQVVALLVAHGAEVNTQDESGYTALTWAARQGHKNVVLKLLELGADKMLQTKDGNIPSEIAKRYKHLEIFSLLSLSLNPLKGKLQQQTKEETICKLLATDSDKEKDHIFSSYTAFGDLEVFLHGLGLEHMTDLLKERDITLRHLLTMRKDEFTKNGITSRDQQKILAALKELDVEEIKFGELPEVAKLEISGDEFLNFLLKLNKQCGHLITAVENIITELPVNSHKIVLEWASPQSFTSVCEELVSNVEDLSEEVCKLKDLIKKLQNERENDPTHMPLVEEVSTWNSRMLKRTAITVCGFGFLLFICKLTFLRK</sequence>
<feature type="chain" id="PRO_0000226355" description="Ankyrin repeat, SAM and basic leucine zipper domain-containing protein 1">
    <location>
        <begin position="1"/>
        <end position="475"/>
    </location>
</feature>
<feature type="repeat" description="ANK 1">
    <location>
        <begin position="45"/>
        <end position="74"/>
    </location>
</feature>
<feature type="repeat" description="ANK 2">
    <location>
        <begin position="78"/>
        <end position="107"/>
    </location>
</feature>
<feature type="repeat" description="ANK 3">
    <location>
        <begin position="110"/>
        <end position="144"/>
    </location>
</feature>
<feature type="repeat" description="ANK 4">
    <location>
        <begin position="148"/>
        <end position="177"/>
    </location>
</feature>
<feature type="repeat" description="ANK 5">
    <location>
        <begin position="181"/>
        <end position="210"/>
    </location>
</feature>
<feature type="repeat" description="ANK 6">
    <location>
        <begin position="214"/>
        <end position="243"/>
    </location>
</feature>
<feature type="domain" description="SAM">
    <location>
        <begin position="272"/>
        <end position="334"/>
    </location>
</feature>
<feature type="region of interest" description="Disordered" evidence="3">
    <location>
        <begin position="1"/>
        <end position="24"/>
    </location>
</feature>
<feature type="compositionally biased region" description="Low complexity" evidence="3">
    <location>
        <begin position="1"/>
        <end position="10"/>
    </location>
</feature>
<feature type="modified residue" description="Phosphoserine" evidence="2">
    <location>
        <position position="17"/>
    </location>
</feature>
<feature type="modified residue" description="Phosphoserine" evidence="2">
    <location>
        <position position="18"/>
    </location>
</feature>
<feature type="modified residue" description="Phosphoserine" evidence="2">
    <location>
        <position position="20"/>
    </location>
</feature>
<accession>Q2QLC6</accession>
<protein>
    <recommendedName>
        <fullName>Ankyrin repeat, SAM and basic leucine zipper domain-containing protein 1</fullName>
    </recommendedName>
    <alternativeName>
        <fullName>Germ cell-specific ankyrin, SAM and basic leucine zipper domain-containing protein</fullName>
    </alternativeName>
</protein>
<organism>
    <name type="scientific">Carollia perspicillata</name>
    <name type="common">Seba's short-tailed bat</name>
    <dbReference type="NCBI Taxonomy" id="40233"/>
    <lineage>
        <taxon>Eukaryota</taxon>
        <taxon>Metazoa</taxon>
        <taxon>Chordata</taxon>
        <taxon>Craniata</taxon>
        <taxon>Vertebrata</taxon>
        <taxon>Euteleostomi</taxon>
        <taxon>Mammalia</taxon>
        <taxon>Eutheria</taxon>
        <taxon>Laurasiatheria</taxon>
        <taxon>Chiroptera</taxon>
        <taxon>Yangochiroptera</taxon>
        <taxon>Phyllostomidae</taxon>
        <taxon>Carolliinae</taxon>
        <taxon>Carollia</taxon>
    </lineage>
</organism>
<comment type="function">
    <text evidence="1">Plays a central role during spermatogenesis by repressing transposable elements and preventing their mobilization, which is essential for the germline integrity. Acts via the piRNA metabolic process, which mediates the repression of transposable elements during meiosis by forming complexes composed of piRNAs and Piwi proteins and governs the methylation and subsequent repression of transposons. Its association with pi-bodies suggests a participation in the primary piRNAs metabolic process. Required prior to the pachytene stage to facilitate the production of multiple types of piRNAs, including those associated with repeats involved in the regulation of retrotransposons. May act by mediating protein-protein interactions during germ cell maturation (By similarity).</text>
</comment>
<comment type="subunit">
    <text evidence="1">Interacts with DDX4, PIWIL1, RANBP9 and TDRD1.</text>
</comment>
<comment type="subcellular location">
    <subcellularLocation>
        <location evidence="1">Cytoplasm</location>
    </subcellularLocation>
    <text evidence="1">Component of the meiotic nuage, also named P granule, a germ-cell-specific organelle required to repress transposon activity during meiosis. Specifically localizes to pi-bodies, a subset of the nuage which contains primary piRNAs (By similarity).</text>
</comment>
<name>ASZ1_CARPS</name>
<evidence type="ECO:0000250" key="1"/>
<evidence type="ECO:0000250" key="2">
    <source>
        <dbReference type="UniProtKB" id="Q8VD46"/>
    </source>
</evidence>
<evidence type="ECO:0000256" key="3">
    <source>
        <dbReference type="SAM" id="MobiDB-lite"/>
    </source>
</evidence>
<dbReference type="EMBL" id="DP000018">
    <property type="protein sequence ID" value="ABB89783.1"/>
    <property type="molecule type" value="Genomic_DNA"/>
</dbReference>
<dbReference type="SMR" id="Q2QLC6"/>
<dbReference type="GO" id="GO:0071546">
    <property type="term" value="C:pi-body"/>
    <property type="evidence" value="ECO:0000250"/>
    <property type="project" value="UniProtKB"/>
</dbReference>
<dbReference type="GO" id="GO:0030154">
    <property type="term" value="P:cell differentiation"/>
    <property type="evidence" value="ECO:0007669"/>
    <property type="project" value="UniProtKB-KW"/>
</dbReference>
<dbReference type="GO" id="GO:0007140">
    <property type="term" value="P:male meiotic nuclear division"/>
    <property type="evidence" value="ECO:0000250"/>
    <property type="project" value="UniProtKB"/>
</dbReference>
<dbReference type="GO" id="GO:0031047">
    <property type="term" value="P:regulatory ncRNA-mediated gene silencing"/>
    <property type="evidence" value="ECO:0007669"/>
    <property type="project" value="UniProtKB-KW"/>
</dbReference>
<dbReference type="GO" id="GO:0007283">
    <property type="term" value="P:spermatogenesis"/>
    <property type="evidence" value="ECO:0000250"/>
    <property type="project" value="UniProtKB"/>
</dbReference>
<dbReference type="GO" id="GO:0010526">
    <property type="term" value="P:transposable element silencing"/>
    <property type="evidence" value="ECO:0000250"/>
    <property type="project" value="UniProtKB"/>
</dbReference>
<dbReference type="CDD" id="cd09521">
    <property type="entry name" value="SAM_ASZ1"/>
    <property type="match status" value="1"/>
</dbReference>
<dbReference type="FunFam" id="1.25.40.20:FF:000192">
    <property type="entry name" value="Ankyrin repeat, SAM and basic leucine zipper domain-containing 1"/>
    <property type="match status" value="1"/>
</dbReference>
<dbReference type="FunFam" id="1.10.150.50:FF:000060">
    <property type="entry name" value="Ankyrin repeat, SAM and basic leucine zipper domain-containing protein 1"/>
    <property type="match status" value="1"/>
</dbReference>
<dbReference type="Gene3D" id="1.25.40.20">
    <property type="entry name" value="Ankyrin repeat-containing domain"/>
    <property type="match status" value="1"/>
</dbReference>
<dbReference type="Gene3D" id="1.10.150.50">
    <property type="entry name" value="Transcription Factor, Ets-1"/>
    <property type="match status" value="1"/>
</dbReference>
<dbReference type="InterPro" id="IPR002110">
    <property type="entry name" value="Ankyrin_rpt"/>
</dbReference>
<dbReference type="InterPro" id="IPR036770">
    <property type="entry name" value="Ankyrin_rpt-contain_sf"/>
</dbReference>
<dbReference type="InterPro" id="IPR042650">
    <property type="entry name" value="Asz1_SAM"/>
</dbReference>
<dbReference type="InterPro" id="IPR001660">
    <property type="entry name" value="SAM"/>
</dbReference>
<dbReference type="InterPro" id="IPR013761">
    <property type="entry name" value="SAM/pointed_sf"/>
</dbReference>
<dbReference type="PANTHER" id="PTHR24157">
    <property type="entry name" value="ANKYRIN REPEAT, SAM AND BASIC LEUCINE ZIPPER DOMAIN-CONTAINING PROTEIN 1"/>
    <property type="match status" value="1"/>
</dbReference>
<dbReference type="PANTHER" id="PTHR24157:SF3">
    <property type="entry name" value="ANKYRIN REPEAT, SAM AND BASIC LEUCINE ZIPPER DOMAIN-CONTAINING PROTEIN 1"/>
    <property type="match status" value="1"/>
</dbReference>
<dbReference type="Pfam" id="PF00023">
    <property type="entry name" value="Ank"/>
    <property type="match status" value="1"/>
</dbReference>
<dbReference type="Pfam" id="PF12796">
    <property type="entry name" value="Ank_2"/>
    <property type="match status" value="1"/>
</dbReference>
<dbReference type="Pfam" id="PF07647">
    <property type="entry name" value="SAM_2"/>
    <property type="match status" value="1"/>
</dbReference>
<dbReference type="PRINTS" id="PR01415">
    <property type="entry name" value="ANKYRIN"/>
</dbReference>
<dbReference type="SMART" id="SM00248">
    <property type="entry name" value="ANK"/>
    <property type="match status" value="5"/>
</dbReference>
<dbReference type="SUPFAM" id="SSF48403">
    <property type="entry name" value="Ankyrin repeat"/>
    <property type="match status" value="1"/>
</dbReference>
<dbReference type="SUPFAM" id="SSF140860">
    <property type="entry name" value="Pseudo ankyrin repeat-like"/>
    <property type="match status" value="1"/>
</dbReference>
<dbReference type="SUPFAM" id="SSF47769">
    <property type="entry name" value="SAM/Pointed domain"/>
    <property type="match status" value="1"/>
</dbReference>
<dbReference type="PROSITE" id="PS50297">
    <property type="entry name" value="ANK_REP_REGION"/>
    <property type="match status" value="1"/>
</dbReference>
<dbReference type="PROSITE" id="PS50088">
    <property type="entry name" value="ANK_REPEAT"/>
    <property type="match status" value="3"/>
</dbReference>
<proteinExistence type="inferred from homology"/>
<keyword id="KW-0040">ANK repeat</keyword>
<keyword id="KW-0963">Cytoplasm</keyword>
<keyword id="KW-0217">Developmental protein</keyword>
<keyword id="KW-0221">Differentiation</keyword>
<keyword id="KW-0469">Meiosis</keyword>
<keyword id="KW-0597">Phosphoprotein</keyword>
<keyword id="KW-0677">Repeat</keyword>
<keyword id="KW-0943">RNA-mediated gene silencing</keyword>
<keyword id="KW-0744">Spermatogenesis</keyword>
<reference key="1">
    <citation type="submission" date="2005-11" db="EMBL/GenBank/DDBJ databases">
        <title>NISC comparative sequencing initiative.</title>
        <authorList>
            <person name="Antonellis A."/>
            <person name="Ayele K."/>
            <person name="Benjamin B."/>
            <person name="Blakesley R.W."/>
            <person name="Boakye A."/>
            <person name="Bouffard G.G."/>
            <person name="Brinkley C."/>
            <person name="Brooks S."/>
            <person name="Chu G."/>
            <person name="Coleman H."/>
            <person name="Engle J."/>
            <person name="Gestole M."/>
            <person name="Greene A."/>
            <person name="Guan X."/>
            <person name="Gupta J."/>
            <person name="Haghighi P."/>
            <person name="Han J."/>
            <person name="Hansen N."/>
            <person name="Ho S.-L."/>
            <person name="Hu P."/>
            <person name="Hunter G."/>
            <person name="Hurle B."/>
            <person name="Idol J.R."/>
            <person name="Kwong P."/>
            <person name="Laric P."/>
            <person name="Larson S."/>
            <person name="Lee-Lin S.-Q."/>
            <person name="Legaspi R."/>
            <person name="Madden M."/>
            <person name="Maduro Q.L."/>
            <person name="Maduro V.B."/>
            <person name="Margulies E.H."/>
            <person name="Masiello C."/>
            <person name="Maskeri B."/>
            <person name="McDowell J."/>
            <person name="Mojidi H.A."/>
            <person name="Mullikin J.C."/>
            <person name="Oestreicher J.S."/>
            <person name="Park M."/>
            <person name="Portnoy M.E."/>
            <person name="Prasad A."/>
            <person name="Puri O."/>
            <person name="Reddix-Dugue N."/>
            <person name="Schandler K."/>
            <person name="Schueler M.G."/>
            <person name="Sison C."/>
            <person name="Stantripop S."/>
            <person name="Stephen E."/>
            <person name="Taye A."/>
            <person name="Thomas J.W."/>
            <person name="Thomas P.J."/>
            <person name="Tsipouri V."/>
            <person name="Ung L."/>
            <person name="Vogt J.L."/>
            <person name="Wetherby K.D."/>
            <person name="Young A."/>
            <person name="Green E.D."/>
        </authorList>
    </citation>
    <scope>NUCLEOTIDE SEQUENCE [LARGE SCALE GENOMIC DNA]</scope>
</reference>